<feature type="chain" id="PRO_1000212930" description="Probable cobalt-precorrin-6B C(15)-methyltransferase (decarboxylating)">
    <location>
        <begin position="1"/>
        <end position="199"/>
    </location>
</feature>
<feature type="binding site" evidence="1">
    <location>
        <position position="24"/>
    </location>
    <ligand>
        <name>S-adenosyl-L-methionine</name>
        <dbReference type="ChEBI" id="CHEBI:59789"/>
    </ligand>
</feature>
<feature type="binding site" evidence="1">
    <location>
        <begin position="48"/>
        <end position="52"/>
    </location>
    <ligand>
        <name>S-adenosyl-L-methionine</name>
        <dbReference type="ChEBI" id="CHEBI:59789"/>
    </ligand>
</feature>
<feature type="binding site" evidence="1">
    <location>
        <position position="72"/>
    </location>
    <ligand>
        <name>S-adenosyl-L-methionine</name>
        <dbReference type="ChEBI" id="CHEBI:59789"/>
    </ligand>
</feature>
<feature type="binding site" evidence="1">
    <location>
        <position position="101"/>
    </location>
    <ligand>
        <name>S-adenosyl-L-methionine</name>
        <dbReference type="ChEBI" id="CHEBI:59789"/>
    </ligand>
</feature>
<reference key="1">
    <citation type="journal article" date="2009" name="Proc. Natl. Acad. Sci. U.S.A.">
        <title>Biogeography of the Sulfolobus islandicus pan-genome.</title>
        <authorList>
            <person name="Reno M.L."/>
            <person name="Held N.L."/>
            <person name="Fields C.J."/>
            <person name="Burke P.V."/>
            <person name="Whitaker R.J."/>
        </authorList>
    </citation>
    <scope>NUCLEOTIDE SEQUENCE [LARGE SCALE GENOMIC DNA]</scope>
    <source>
        <strain>M.16.4 / Kamchatka #3</strain>
    </source>
</reference>
<accession>C4KJM8</accession>
<protein>
    <recommendedName>
        <fullName evidence="1">Probable cobalt-precorrin-6B C(15)-methyltransferase (decarboxylating)</fullName>
        <ecNumber evidence="1">2.1.1.196</ecNumber>
    </recommendedName>
</protein>
<proteinExistence type="inferred from homology"/>
<sequence>MEWKYVIPGIPDNFFERDEEIPMTKEEIRALALSKLRIRKGDMILDIGCGTGSVTVEASLLVGSTGKVYGVDKEEKAINLTRRNAEKFGVLNNIVLIKGEAPEILFTINEKFDRIFIGGGSEKIKEIISASWEIIKKGGRVVIDAILLETVNNAISAMENIGFMNLEITEVIIAKGMKTKVGTAMMTRNPIFIISGEKQ</sequence>
<comment type="function">
    <text evidence="1">Catalyzes the methylation of C-15 in cobalt-precorrin-6B followed by the decarboxylation of C-12 to form cobalt-precorrin-7.</text>
</comment>
<comment type="catalytic activity">
    <reaction evidence="1">
        <text>Co-precorrin-6B + S-adenosyl-L-methionine = Co-precorrin-7 + S-adenosyl-L-homocysteine + CO2</text>
        <dbReference type="Rhea" id="RHEA:36067"/>
        <dbReference type="ChEBI" id="CHEBI:16526"/>
        <dbReference type="ChEBI" id="CHEBI:57856"/>
        <dbReference type="ChEBI" id="CHEBI:59789"/>
        <dbReference type="ChEBI" id="CHEBI:70791"/>
        <dbReference type="ChEBI" id="CHEBI:72780"/>
        <dbReference type="EC" id="2.1.1.196"/>
    </reaction>
</comment>
<comment type="pathway">
    <text evidence="1">Cofactor biosynthesis; adenosylcobalamin biosynthesis; cob(II)yrinate a,c-diamide from sirohydrochlorin (anaerobic route): step 8/10.</text>
</comment>
<comment type="similarity">
    <text evidence="1">Belongs to the methyltransferase superfamily. Archaeal-type CbiT family.</text>
</comment>
<organism>
    <name type="scientific">Saccharolobus islandicus (strain M.16.4 / Kamchatka #3)</name>
    <name type="common">Sulfolobus islandicus</name>
    <dbReference type="NCBI Taxonomy" id="426118"/>
    <lineage>
        <taxon>Archaea</taxon>
        <taxon>Thermoproteota</taxon>
        <taxon>Thermoprotei</taxon>
        <taxon>Sulfolobales</taxon>
        <taxon>Sulfolobaceae</taxon>
        <taxon>Saccharolobus</taxon>
    </lineage>
</organism>
<evidence type="ECO:0000255" key="1">
    <source>
        <dbReference type="HAMAP-Rule" id="MF_00786"/>
    </source>
</evidence>
<gene>
    <name evidence="1" type="primary">cbiT</name>
    <name type="ordered locus">M164_0112</name>
</gene>
<keyword id="KW-0169">Cobalamin biosynthesis</keyword>
<keyword id="KW-0489">Methyltransferase</keyword>
<keyword id="KW-0949">S-adenosyl-L-methionine</keyword>
<keyword id="KW-0808">Transferase</keyword>
<dbReference type="EC" id="2.1.1.196" evidence="1"/>
<dbReference type="EMBL" id="CP001402">
    <property type="protein sequence ID" value="ACR40748.1"/>
    <property type="molecule type" value="Genomic_DNA"/>
</dbReference>
<dbReference type="RefSeq" id="WP_012710289.1">
    <property type="nucleotide sequence ID" value="NC_012726.1"/>
</dbReference>
<dbReference type="SMR" id="C4KJM8"/>
<dbReference type="GeneID" id="84060590"/>
<dbReference type="KEGG" id="sid:M164_0112"/>
<dbReference type="HOGENOM" id="CLU_094143_0_0_2"/>
<dbReference type="UniPathway" id="UPA00148">
    <property type="reaction ID" value="UER00229"/>
</dbReference>
<dbReference type="Proteomes" id="UP000001479">
    <property type="component" value="Chromosome"/>
</dbReference>
<dbReference type="GO" id="GO:0043776">
    <property type="term" value="F:cobalt-precorrin-6B C5-methyltransferase activity"/>
    <property type="evidence" value="ECO:0007669"/>
    <property type="project" value="RHEA"/>
</dbReference>
<dbReference type="GO" id="GO:0008276">
    <property type="term" value="F:protein methyltransferase activity"/>
    <property type="evidence" value="ECO:0007669"/>
    <property type="project" value="InterPro"/>
</dbReference>
<dbReference type="GO" id="GO:0019251">
    <property type="term" value="P:anaerobic cobalamin biosynthetic process"/>
    <property type="evidence" value="ECO:0007669"/>
    <property type="project" value="UniProtKB-UniRule"/>
</dbReference>
<dbReference type="GO" id="GO:0032259">
    <property type="term" value="P:methylation"/>
    <property type="evidence" value="ECO:0007669"/>
    <property type="project" value="UniProtKB-KW"/>
</dbReference>
<dbReference type="CDD" id="cd02440">
    <property type="entry name" value="AdoMet_MTases"/>
    <property type="match status" value="1"/>
</dbReference>
<dbReference type="Gene3D" id="3.40.50.150">
    <property type="entry name" value="Vaccinia Virus protein VP39"/>
    <property type="match status" value="1"/>
</dbReference>
<dbReference type="HAMAP" id="MF_00786">
    <property type="entry name" value="CbiT"/>
    <property type="match status" value="1"/>
</dbReference>
<dbReference type="InterPro" id="IPR023475">
    <property type="entry name" value="CbiT"/>
</dbReference>
<dbReference type="InterPro" id="IPR014008">
    <property type="entry name" value="Cbl_synth_MTase_CbiT"/>
</dbReference>
<dbReference type="InterPro" id="IPR050714">
    <property type="entry name" value="Cobalamin_biosynth_MTase"/>
</dbReference>
<dbReference type="InterPro" id="IPR025714">
    <property type="entry name" value="Methyltranfer_dom"/>
</dbReference>
<dbReference type="InterPro" id="IPR029063">
    <property type="entry name" value="SAM-dependent_MTases_sf"/>
</dbReference>
<dbReference type="NCBIfam" id="TIGR02469">
    <property type="entry name" value="CbiT"/>
    <property type="match status" value="1"/>
</dbReference>
<dbReference type="NCBIfam" id="NF001556">
    <property type="entry name" value="PRK00377.1"/>
    <property type="match status" value="1"/>
</dbReference>
<dbReference type="PANTHER" id="PTHR43182">
    <property type="entry name" value="COBALT-PRECORRIN-6B C(15)-METHYLTRANSFERASE (DECARBOXYLATING)"/>
    <property type="match status" value="1"/>
</dbReference>
<dbReference type="PANTHER" id="PTHR43182:SF1">
    <property type="entry name" value="COBALT-PRECORRIN-7 C(5)-METHYLTRANSFERASE"/>
    <property type="match status" value="1"/>
</dbReference>
<dbReference type="Pfam" id="PF13847">
    <property type="entry name" value="Methyltransf_31"/>
    <property type="match status" value="1"/>
</dbReference>
<dbReference type="SUPFAM" id="SSF53335">
    <property type="entry name" value="S-adenosyl-L-methionine-dependent methyltransferases"/>
    <property type="match status" value="1"/>
</dbReference>
<name>CBIT_SACI6</name>